<accession>Q8ZPA3</accession>
<dbReference type="EMBL" id="AE006468">
    <property type="protein sequence ID" value="AAL20551.1"/>
    <property type="molecule type" value="Genomic_DNA"/>
</dbReference>
<dbReference type="RefSeq" id="NP_460592.1">
    <property type="nucleotide sequence ID" value="NC_003197.2"/>
</dbReference>
<dbReference type="RefSeq" id="WP_000949370.1">
    <property type="nucleotide sequence ID" value="NC_003197.2"/>
</dbReference>
<dbReference type="PDB" id="4F3S">
    <property type="method" value="X-ray"/>
    <property type="resolution" value="2.14 A"/>
    <property type="chains" value="A=23-253"/>
</dbReference>
<dbReference type="PDBsum" id="4F3S"/>
<dbReference type="SMR" id="Q8ZPA3"/>
<dbReference type="STRING" id="99287.STM1633"/>
<dbReference type="PaxDb" id="99287-STM1633"/>
<dbReference type="GeneID" id="1253151"/>
<dbReference type="KEGG" id="stm:STM1633"/>
<dbReference type="PATRIC" id="fig|99287.12.peg.1725"/>
<dbReference type="HOGENOM" id="CLU_019602_18_0_6"/>
<dbReference type="OMA" id="PRGMAYA"/>
<dbReference type="PhylomeDB" id="Q8ZPA3"/>
<dbReference type="BioCyc" id="SENT99287:STM1633-MONOMER"/>
<dbReference type="EvolutionaryTrace" id="Q8ZPA3"/>
<dbReference type="Proteomes" id="UP000001014">
    <property type="component" value="Chromosome"/>
</dbReference>
<dbReference type="GO" id="GO:0035796">
    <property type="term" value="C:ATP-binding cassette (ABC) transporter complex, transmembrane substrate-binding subunit-containing"/>
    <property type="evidence" value="ECO:0000314"/>
    <property type="project" value="UniProtKB"/>
</dbReference>
<dbReference type="GO" id="GO:0030288">
    <property type="term" value="C:outer membrane-bounded periplasmic space"/>
    <property type="evidence" value="ECO:0000318"/>
    <property type="project" value="GO_Central"/>
</dbReference>
<dbReference type="GO" id="GO:0016597">
    <property type="term" value="F:amino acid binding"/>
    <property type="evidence" value="ECO:0000314"/>
    <property type="project" value="UniProtKB"/>
</dbReference>
<dbReference type="GO" id="GO:0042941">
    <property type="term" value="P:D-alanine transmembrane transport"/>
    <property type="evidence" value="ECO:0000315"/>
    <property type="project" value="UniProtKB"/>
</dbReference>
<dbReference type="GO" id="GO:0052170">
    <property type="term" value="P:symbiont-mediated suppression of host innate immune response"/>
    <property type="evidence" value="ECO:0000314"/>
    <property type="project" value="UniProtKB"/>
</dbReference>
<dbReference type="CDD" id="cd13628">
    <property type="entry name" value="PBP2_Ala"/>
    <property type="match status" value="1"/>
</dbReference>
<dbReference type="Gene3D" id="3.40.190.10">
    <property type="entry name" value="Periplasmic binding protein-like II"/>
    <property type="match status" value="2"/>
</dbReference>
<dbReference type="InterPro" id="IPR001638">
    <property type="entry name" value="Solute-binding_3/MltF_N"/>
</dbReference>
<dbReference type="PANTHER" id="PTHR35936:SF36">
    <property type="entry name" value="ABC TRANSPORTER ARGININE-BINDING PROTEIN 1"/>
    <property type="match status" value="1"/>
</dbReference>
<dbReference type="PANTHER" id="PTHR35936">
    <property type="entry name" value="MEMBRANE-BOUND LYTIC MUREIN TRANSGLYCOSYLASE F"/>
    <property type="match status" value="1"/>
</dbReference>
<dbReference type="Pfam" id="PF00497">
    <property type="entry name" value="SBP_bac_3"/>
    <property type="match status" value="1"/>
</dbReference>
<dbReference type="SMART" id="SM00062">
    <property type="entry name" value="PBPb"/>
    <property type="match status" value="1"/>
</dbReference>
<dbReference type="SUPFAM" id="SSF53850">
    <property type="entry name" value="Periplasmic binding protein-like II"/>
    <property type="match status" value="1"/>
</dbReference>
<evidence type="ECO:0000255" key="1"/>
<evidence type="ECO:0000269" key="2">
    <source>
    </source>
</evidence>
<evidence type="ECO:0000269" key="3">
    <source>
    </source>
</evidence>
<evidence type="ECO:0000303" key="4">
    <source>
    </source>
</evidence>
<evidence type="ECO:0000303" key="5">
    <source>
    </source>
</evidence>
<evidence type="ECO:0000305" key="6"/>
<evidence type="ECO:0000312" key="7">
    <source>
        <dbReference type="EMBL" id="AAL20551.1"/>
    </source>
</evidence>
<evidence type="ECO:0000312" key="8">
    <source>
        <dbReference type="Proteomes" id="UP000001014"/>
    </source>
</evidence>
<evidence type="ECO:0007744" key="9">
    <source>
        <dbReference type="PDB" id="4F3S"/>
    </source>
</evidence>
<evidence type="ECO:0007829" key="10">
    <source>
        <dbReference type="PDB" id="4F3S"/>
    </source>
</evidence>
<protein>
    <recommendedName>
        <fullName evidence="6">ABC transporter D-alanine-binding periplasmic protein</fullName>
    </recommendedName>
    <alternativeName>
        <fullName evidence="4">D-alanine transporter in Salmonella</fullName>
    </alternativeName>
</protein>
<organism evidence="8">
    <name type="scientific">Salmonella typhimurium (strain LT2 / SGSC1412 / ATCC 700720)</name>
    <dbReference type="NCBI Taxonomy" id="99287"/>
    <lineage>
        <taxon>Bacteria</taxon>
        <taxon>Pseudomonadati</taxon>
        <taxon>Pseudomonadota</taxon>
        <taxon>Gammaproteobacteria</taxon>
        <taxon>Enterobacterales</taxon>
        <taxon>Enterobacteriaceae</taxon>
        <taxon>Salmonella</taxon>
    </lineage>
</organism>
<gene>
    <name evidence="4" type="primary">dalS</name>
    <name evidence="7" type="ordered locus">STM1633</name>
</gene>
<name>DALS_SALTY</name>
<feature type="signal peptide" evidence="1">
    <location>
        <begin position="1"/>
        <end position="22"/>
    </location>
</feature>
<feature type="chain" id="PRO_5004318181" description="ABC transporter D-alanine-binding periplasmic protein" evidence="1">
    <location>
        <begin position="23"/>
        <end position="253"/>
    </location>
</feature>
<feature type="binding site" evidence="2 9">
    <location>
        <position position="95"/>
    </location>
    <ligand>
        <name>D-alanine</name>
        <dbReference type="ChEBI" id="CHEBI:57416"/>
    </ligand>
</feature>
<feature type="binding site" evidence="2 9">
    <location>
        <position position="97"/>
    </location>
    <ligand>
        <name>D-alanine</name>
        <dbReference type="ChEBI" id="CHEBI:57416"/>
    </ligand>
</feature>
<feature type="binding site" evidence="2 9">
    <location>
        <position position="102"/>
    </location>
    <ligand>
        <name>D-alanine</name>
        <dbReference type="ChEBI" id="CHEBI:57416"/>
    </ligand>
</feature>
<feature type="binding site" evidence="2 9">
    <location>
        <position position="147"/>
    </location>
    <ligand>
        <name>D-alanine</name>
        <dbReference type="ChEBI" id="CHEBI:57416"/>
    </ligand>
</feature>
<feature type="binding site" evidence="2 9">
    <location>
        <position position="191"/>
    </location>
    <ligand>
        <name>D-alanine</name>
        <dbReference type="ChEBI" id="CHEBI:57416"/>
    </ligand>
</feature>
<feature type="mutagenesis site" description="Additionally binds alanine, arginine, glutamine, leucine, lysine, and phenylalanine." evidence="2">
    <original>M</original>
    <variation>A</variation>
    <location>
        <position position="146"/>
    </location>
</feature>
<feature type="mutagenesis site" description="Additionally binds methionine." evidence="2">
    <original>M</original>
    <variation>T</variation>
    <variation>A</variation>
    <location>
        <position position="146"/>
    </location>
</feature>
<feature type="strand" evidence="10">
    <location>
        <begin position="30"/>
        <end position="35"/>
    </location>
</feature>
<feature type="turn" evidence="10">
    <location>
        <begin position="40"/>
        <end position="42"/>
    </location>
</feature>
<feature type="strand" evidence="10">
    <location>
        <begin position="43"/>
        <end position="45"/>
    </location>
</feature>
<feature type="strand" evidence="10">
    <location>
        <begin position="51"/>
        <end position="53"/>
    </location>
</feature>
<feature type="helix" evidence="10">
    <location>
        <begin position="54"/>
        <end position="66"/>
    </location>
</feature>
<feature type="strand" evidence="10">
    <location>
        <begin position="69"/>
        <end position="74"/>
    </location>
</feature>
<feature type="helix" evidence="10">
    <location>
        <begin position="77"/>
        <end position="85"/>
    </location>
</feature>
<feature type="strand" evidence="10">
    <location>
        <begin position="88"/>
        <end position="97"/>
    </location>
</feature>
<feature type="helix" evidence="10">
    <location>
        <begin position="100"/>
        <end position="103"/>
    </location>
</feature>
<feature type="strand" evidence="10">
    <location>
        <begin position="106"/>
        <end position="108"/>
    </location>
</feature>
<feature type="strand" evidence="10">
    <location>
        <begin position="112"/>
        <end position="122"/>
    </location>
</feature>
<feature type="helix" evidence="10">
    <location>
        <begin position="132"/>
        <end position="137"/>
    </location>
</feature>
<feature type="strand" evidence="10">
    <location>
        <begin position="140"/>
        <end position="143"/>
    </location>
</feature>
<feature type="helix" evidence="10">
    <location>
        <begin position="148"/>
        <end position="155"/>
    </location>
</feature>
<feature type="turn" evidence="10">
    <location>
        <begin position="156"/>
        <end position="160"/>
    </location>
</feature>
<feature type="helix" evidence="10">
    <location>
        <begin position="164"/>
        <end position="166"/>
    </location>
</feature>
<feature type="strand" evidence="10">
    <location>
        <begin position="168"/>
        <end position="172"/>
    </location>
</feature>
<feature type="helix" evidence="10">
    <location>
        <begin position="173"/>
        <end position="181"/>
    </location>
</feature>
<feature type="strand" evidence="10">
    <location>
        <begin position="186"/>
        <end position="191"/>
    </location>
</feature>
<feature type="helix" evidence="10">
    <location>
        <begin position="192"/>
        <end position="200"/>
    </location>
</feature>
<feature type="strand" evidence="10">
    <location>
        <begin position="206"/>
        <end position="223"/>
    </location>
</feature>
<feature type="helix" evidence="10">
    <location>
        <begin position="227"/>
        <end position="239"/>
    </location>
</feature>
<feature type="helix" evidence="10">
    <location>
        <begin position="241"/>
        <end position="253"/>
    </location>
</feature>
<comment type="function">
    <text evidence="2 3">Part of the ABC transporter complex dalSTUV, that imports D-alanine into the cytoplasm (PubMed:22418438, PubMed:25425233). Helps protect the organism from oxidative killing by host neutrophils through sequestration of D-alanine, a substrate that is converted to hydrogen peroxide by the host enzyme DAO (D-amino acid oxidase) (PubMed:22418438, PubMed:25425233). DalS shuttles D-alanine from the periplasm to the DalTUV complex situated in the inner membrane and through hydrolysis of ATP, D-alanine is transported across the membrane into the cytoplasm (PubMed:22418438). Not required for the metabolism of D-alanine found in the stem peptide of peptidoglycan (PubMed:22418438).</text>
</comment>
<comment type="subunit">
    <text evidence="2">Monomer.</text>
</comment>
<comment type="subcellular location">
    <subcellularLocation>
        <location evidence="2">Periplasm</location>
    </subcellularLocation>
</comment>
<comment type="induction">
    <text evidence="2">Expression is increased when grown in low magnesium minimal medium with an acidic pH, in a manner dependent on response regulator SsrB.</text>
</comment>
<comment type="disruption phenotype">
    <text evidence="2 3">Does not affect growth in vitro but leads to decreased growth rate in macrophages (PubMed:22418438). Decreases survival in host neutrophils (PubMed:25425233). Decreases virulence in a mouse infection model (PubMed:22418438).</text>
</comment>
<comment type="similarity">
    <text evidence="6">Belongs to the bacterial solute-binding protein 3 family.</text>
</comment>
<sequence>MLSKKFGLSMIVLGIMSSSAFADSIVEGRTLNVAVSPASPPMLFKSADGKLQGIDLELFSSYCQSRHCKLNITEYAWDGMLGAVASGQADVAFSGISITDKRKKVIDFSEPYYINSFYLVSMANHKITLNNLNELNKYSIGYPRGMAYSDLIKNDLEPKGYYSLSKVKLYPTYNETMADLKNGNLDLAFIEEPVYFTFKNKKKMPIESRYVFKNVDQLGIAFKKGSPVRDDFNLWLKEQGPQKISGIVDSWMK</sequence>
<keyword id="KW-0002">3D-structure</keyword>
<keyword id="KW-0029">Amino-acid transport</keyword>
<keyword id="KW-0574">Periplasm</keyword>
<keyword id="KW-1185">Reference proteome</keyword>
<keyword id="KW-0732">Signal</keyword>
<keyword id="KW-0813">Transport</keyword>
<keyword id="KW-0843">Virulence</keyword>
<proteinExistence type="evidence at protein level"/>
<reference evidence="8" key="1">
    <citation type="journal article" date="2001" name="Nature">
        <title>Complete genome sequence of Salmonella enterica serovar Typhimurium LT2.</title>
        <authorList>
            <person name="McClelland M."/>
            <person name="Sanderson K.E."/>
            <person name="Spieth J."/>
            <person name="Clifton S.W."/>
            <person name="Latreille P."/>
            <person name="Courtney L."/>
            <person name="Porwollik S."/>
            <person name="Ali J."/>
            <person name="Dante M."/>
            <person name="Du F."/>
            <person name="Hou S."/>
            <person name="Layman D."/>
            <person name="Leonard S."/>
            <person name="Nguyen C."/>
            <person name="Scott K."/>
            <person name="Holmes A."/>
            <person name="Grewal N."/>
            <person name="Mulvaney E."/>
            <person name="Ryan E."/>
            <person name="Sun H."/>
            <person name="Florea L."/>
            <person name="Miller W."/>
            <person name="Stoneking T."/>
            <person name="Nhan M."/>
            <person name="Waterston R."/>
            <person name="Wilson R.K."/>
        </authorList>
    </citation>
    <scope>NUCLEOTIDE SEQUENCE [LARGE SCALE GENOMIC DNA]</scope>
    <source>
        <strain evidence="8">LT2 / SGSC1412 / ATCC 700720</strain>
    </source>
</reference>
<reference evidence="6" key="2">
    <citation type="journal article" date="2014" name="MBio">
        <title>Salmonella evades D-amino acid oxidase to promote infection in neutrophils.</title>
        <authorList>
            <person name="Tuinema B.R."/>
            <person name="Reid-Yu S.A."/>
            <person name="Coombes B.K."/>
        </authorList>
    </citation>
    <scope>FUNCTION</scope>
    <scope>DISRUPTION PHENOTYPE</scope>
    <source>
        <strain evidence="5">SL1344</strain>
    </source>
</reference>
<reference evidence="9" key="3">
    <citation type="journal article" date="2012" name="J. Biol. Chem.">
        <title>Characterization of DalS, an ATP-binding cassette transporter for D-alanine, and its role in pathogenesis in Salmonella enterica.</title>
        <authorList>
            <person name="Osborne S.E."/>
            <person name="Tuinema B.R."/>
            <person name="Mok M.C."/>
            <person name="Lau P.S."/>
            <person name="Bui N.K."/>
            <person name="Tomljenovic-Berube A.M."/>
            <person name="Vollmer W."/>
            <person name="Zhang K."/>
            <person name="Junop M."/>
            <person name="Coombes B.K."/>
        </authorList>
    </citation>
    <scope>X-RAY CRYSTALLOGRAPHY (2.14 ANGSTROMS) OF 23-253 IN COMPLEX WITH D-ALANINE</scope>
    <scope>FUNCTION</scope>
    <scope>SUBUNIT</scope>
    <scope>SUBCELLULAR LOCATION</scope>
    <scope>INDUCTION</scope>
    <scope>DISRUPTION PHENOTYPE</scope>
    <scope>MUTAGENESIS OF MET-146</scope>
    <source>
        <strain evidence="4">SL1344</strain>
    </source>
</reference>